<keyword id="KW-0002">3D-structure</keyword>
<keyword id="KW-0046">Antibiotic resistance</keyword>
<keyword id="KW-0378">Hydrolase</keyword>
<keyword id="KW-0479">Metal-binding</keyword>
<keyword id="KW-0574">Periplasm</keyword>
<keyword id="KW-0614">Plasmid</keyword>
<keyword id="KW-0732">Signal</keyword>
<keyword id="KW-0862">Zinc</keyword>
<organism evidence="12">
    <name type="scientific">Pseudomonas aeruginosa</name>
    <dbReference type="NCBI Taxonomy" id="287"/>
    <lineage>
        <taxon>Bacteria</taxon>
        <taxon>Pseudomonadati</taxon>
        <taxon>Pseudomonadota</taxon>
        <taxon>Gammaproteobacteria</taxon>
        <taxon>Pseudomonadales</taxon>
        <taxon>Pseudomonadaceae</taxon>
        <taxon>Pseudomonas</taxon>
    </lineage>
</organism>
<accession>Q840P9</accession>
<protein>
    <recommendedName>
        <fullName evidence="8">Metallo-beta-lactamase VIM-7</fullName>
        <ecNumber evidence="6">3.5.2.6</ecNumber>
    </recommendedName>
</protein>
<evidence type="ECO:0000250" key="1">
    <source>
        <dbReference type="UniProtKB" id="A0A0F7KYQ8"/>
    </source>
</evidence>
<evidence type="ECO:0000250" key="2">
    <source>
        <dbReference type="UniProtKB" id="P25910"/>
    </source>
</evidence>
<evidence type="ECO:0000255" key="3"/>
<evidence type="ECO:0000269" key="4">
    <source>
    </source>
</evidence>
<evidence type="ECO:0000269" key="5">
    <source>
    </source>
</evidence>
<evidence type="ECO:0000269" key="6">
    <source>
    </source>
</evidence>
<evidence type="ECO:0000269" key="7">
    <source>
    </source>
</evidence>
<evidence type="ECO:0000303" key="8">
    <source>
    </source>
</evidence>
<evidence type="ECO:0000303" key="9">
    <source>
    </source>
</evidence>
<evidence type="ECO:0000303" key="10">
    <source>
    </source>
</evidence>
<evidence type="ECO:0000305" key="11"/>
<evidence type="ECO:0000312" key="12">
    <source>
        <dbReference type="EMBL" id="CAD61201.1"/>
    </source>
</evidence>
<evidence type="ECO:0000312" key="13">
    <source>
        <dbReference type="EMBL" id="CAO91763.1"/>
    </source>
</evidence>
<evidence type="ECO:0007744" key="14">
    <source>
        <dbReference type="PDB" id="2Y87"/>
    </source>
</evidence>
<evidence type="ECO:0007744" key="15">
    <source>
        <dbReference type="PDB" id="2Y8A"/>
    </source>
</evidence>
<evidence type="ECO:0007744" key="16">
    <source>
        <dbReference type="PDB" id="2Y8B"/>
    </source>
</evidence>
<evidence type="ECO:0007744" key="17">
    <source>
        <dbReference type="PDB" id="4D1T"/>
    </source>
</evidence>
<evidence type="ECO:0007744" key="18">
    <source>
        <dbReference type="PDB" id="4D1U"/>
    </source>
</evidence>
<evidence type="ECO:0007744" key="19">
    <source>
        <dbReference type="PDB" id="4D1V"/>
    </source>
</evidence>
<evidence type="ECO:0007744" key="20">
    <source>
        <dbReference type="PDB" id="4D1W"/>
    </source>
</evidence>
<evidence type="ECO:0007829" key="21">
    <source>
        <dbReference type="PDB" id="4D1T"/>
    </source>
</evidence>
<gene>
    <name evidence="9 10" type="primary">VIM-7</name>
    <name evidence="12" type="synonym">blaVIM-7</name>
</gene>
<sequence length="265" mass="28112">MFQIRSFLVGISAFVMAVLGSAAYSAQPGGEYPTVDDIPVGEVRLYKIGDGVWSHIATQKLGDTVYSSNGLIVRDADELLLIDTAWGAKNTVALLAEIEKQIGLPVTRSISTHFHDDRVGGVDVLRAAGVATYTSPLTRQLAEAAGNEVPAHSLKALSSSGDVVRFGPVEVFYPGAAHSGDNLVVYVPAVRVLFGGCAVHEASRESAGNVADANLAEWPATIKRIQQRYPEAEVVIPGHGLPGGLELLQHTTNVVKTHKVRPVAE</sequence>
<name>BLBV7_PSEAI</name>
<comment type="function">
    <text evidence="5 6">Class B beta-lactamase which confers resistance to the beta-lactam antibiotics, including penicillins, cephalosporins and carbapenems (PubMed:14693560). Acts via hydrolysis of the beta-lactam ring (PubMed:18559652). Has penicillin-, cephalosporin- and carbapenem-hydrolyzing activities (PubMed:18559652).</text>
</comment>
<comment type="catalytic activity">
    <reaction evidence="6">
        <text>a beta-lactam + H2O = a substituted beta-amino acid</text>
        <dbReference type="Rhea" id="RHEA:20401"/>
        <dbReference type="ChEBI" id="CHEBI:15377"/>
        <dbReference type="ChEBI" id="CHEBI:35627"/>
        <dbReference type="ChEBI" id="CHEBI:140347"/>
        <dbReference type="EC" id="3.5.2.6"/>
    </reaction>
</comment>
<comment type="cofactor">
    <cofactor evidence="1">
        <name>Zn(2+)</name>
        <dbReference type="ChEBI" id="CHEBI:29105"/>
    </cofactor>
</comment>
<comment type="biophysicochemical properties">
    <kinetics>
        <KM evidence="6">17 uM for benzylpenicillin (at pH 7.0 and 25 degrees Celsius)</KM>
        <KM evidence="6">15 uM for ampicillin (at pH 7.0 and 25 degrees Celsius)</KM>
        <KM evidence="6">84 uM for carbenicillin (at pH 7.0 and 25 degrees Celsius)</KM>
        <KM evidence="6">66 uM for azlocillin (at pH 7.0 and 25 degrees Celsius)</KM>
        <KM evidence="6">860 uM for cloxacillin (at pH 7.0 and 25 degrees Celsius)</KM>
        <KM evidence="6">26 uM for piperacillin (at pH 7.0 and 25 degrees Celsius)</KM>
        <KM evidence="6">45 uM for cefalotin (at pH 7.0 and 25 degrees Celsius)</KM>
        <KM evidence="6">250 uM for cephaloridine (at pH 7.0 and 25 degrees Celsius)</KM>
        <KM evidence="6">58 uM for nitrocefin (at pH 7.0 and 25 degrees Celsius)</KM>
        <KM evidence="6">29 uM for cefuroxime (at pH 7.0 and 25 degrees Celsius)</KM>
        <KM evidence="6">68 uM for cefoxitin (at pH 7.0 and 25 degrees Celsius)</KM>
        <KM evidence="6">120 uM for ceftazidime (at pH 7.0 and 25 degrees Celsius)</KM>
        <KM evidence="6">22 uM for cefotaxime (at pH 7.0 and 25 degrees Celsius)</KM>
        <KM evidence="6">580 uM for cefepime (at pH 7.0 and 25 degrees Celsius)</KM>
        <KM evidence="6">75 uM for moxalactam (at pH 7.0 and 25 degrees Celsius)</KM>
        <KM evidence="6">27 uM for imipenem (at pH 7.0 and 25 degrees Celsius)</KM>
        <KM evidence="6">38 uM for meropenem (at pH 7.0 and 25 degrees Celsius)</KM>
        <KM evidence="6">28 uM for ertapenem (at pH 7.0 and 25 degrees Celsius)</KM>
        <KM evidence="6">2700 uM for aztreonam (at pH 7.0 and 25 degrees Celsius)</KM>
        <KM evidence="6">3500 uM for tazobactam (at pH 7.0 and 25 degrees Celsius)</KM>
        <KM evidence="6">740 uM for sulbactam (at pH 7.0 and 25 degrees Celsius)</KM>
        <KM evidence="6">940 uM for clavulanic acid (at pH 7.0 and 25 degrees Celsius)</KM>
        <text evidence="6">kcat is 430 sec(-1) with benzylpenicillin as substrate (at pH 7.0 and 25 degrees Celsius) (PubMed:18559652). kcat is 190 sec(-1) with ampicillin as substrate (at pH 7.0 and 25 degrees Celsius) (PubMed:18559652). kcat is 1200 sec(-1) with carbenicillin as substrate (at pH 7.0 and 25 degrees Celsius) (PubMed:18559652). kcat is 78 sec(-1) with azlocillin as substrate (at pH 7.0 and 25 degrees Celsius) (PubMed:18559652). kcat is 2500 sec(-1) with cloxacillin as substrate (at pH 7.0 and 25 degrees Celsius) (PubMed:18559652). kcat is 140 sec(-1) with piperacillin as substrate (at pH 7.0 and 25 degrees Celsius) (PubMed:18559652). kcat is 180 sec(-1) with cefalotin as substrate (at pH 7.0 and 25 degrees Celsius) (PubMed:18559652). kcat is 180 sec(-1) with cephaloridine as substrate (at pH 7.0 and 25 degrees Celsius) (PubMed:18559652). kcat is 1500 sec(-1) with nitrocefin as substrate (at pH 7.0 and 25 degrees Celsius) (PubMed:18559652). kcat is 16 sec(-1) with cefuroxime as substrate (at pH 7.0 and 25 degrees Celsius) (PubMed:18559652). kcat is 10 sec(-1) with cefoxitin as substrate (at pH 7.0 and 25 degrees Celsius) (PubMed:18559652). kcat is 1.4 sec(-1) with ceftazidime as substrate (at pH 7.0 and 25 degrees Celsius) (PubMed:18559652). kcat is 56 sec(-1) with cefotaxime as substrate (at pH 7.0 and 25 degrees Celsius) (PubMed:18559652). kcat is 5.3 sec(-1) with cefepime as substrate (at pH 7.0 and 25 degrees Celsius) (PubMed:18559652). kcat is 230 sec(-1) with moxalactam as substrate (at pH 7.0 and 25 degrees Celsius) (PubMed:18559652). kcat is 42 sec(-1) with meropenem as substrate (at pH 7.0 and 25 degrees Celsius) (PubMed:18559652). kcat is 100 sec(-1) with imipenem as substrate (at pH 7.0 and 25 degrees Celsius) (PubMed:18559652). kcat is 8 sec(-1) with ertapenem as substrate (at pH 7.0 and 25 degrees Celsius) (PubMed:18559652). kcat is 68 sec(-1) with tazobactam as substrate (at pH 7.0 and 25 degrees Celsius) (PubMed:18559652). kcat is 110 sec(-1) with sulbactam as substrate (at pH 7.0 and 25 degrees Celsius) (PubMed:18559652). kcat is 2.3 sec(-1) with clavulanic acid as substrate (at pH 7.0 and 25 degrees Celsius) (PubMed:18559652).</text>
    </kinetics>
</comment>
<comment type="subunit">
    <text evidence="2">Monomer.</text>
</comment>
<comment type="subcellular location">
    <subcellularLocation>
        <location evidence="2">Periplasm</location>
    </subcellularLocation>
</comment>
<comment type="miscellaneous">
    <text evidence="4">The class B beta-lactamase family has a specific amino-acid numbering system known as BBL, for standard numbering of class B beta-lactamases. A multiple sequence alignment was used to derive a consensus sequence and then the consensus was numbered taking into account insertions and deletions. This allows use of identical numbers, e.g. for active site residues, despite differences in protein length. UniProt always uses natural numbering of residues, hence there appear to be differences in numbering between this entry and some papers.</text>
</comment>
<comment type="similarity">
    <text evidence="11">Belongs to the metallo-beta-lactamase superfamily. Class-B beta-lactamase family.</text>
</comment>
<geneLocation type="plasmid" evidence="13">
    <name>pMATVIM-7</name>
</geneLocation>
<reference evidence="12" key="1">
    <citation type="journal article" date="2004" name="Antimicrob. Agents Chemother.">
        <title>blaVIM-7, an evolutionarily distinct metallo-beta-lactamase gene in a Pseudomonas aeruginosa isolate from the United States.</title>
        <authorList>
            <person name="Toleman M.A."/>
            <person name="Rolston K."/>
            <person name="Jones R.N."/>
            <person name="Walsh T.R."/>
        </authorList>
    </citation>
    <scope>NUCLEOTIDE SEQUENCE [GENOMIC DNA]</scope>
    <scope>FUNCTION</scope>
    <source>
        <strain evidence="8">07-406</strain>
    </source>
</reference>
<reference evidence="13" key="2">
    <citation type="journal article" date="2008" name="Antimicrob. Agents Chemother.">
        <title>Complete Sequence of p07-406, a 24,179-base-pair plasmid harboring the blaVIM-7 metallo-beta-lactamase gene in a Pseudomonas aeruginosa isolate from the United States.</title>
        <authorList>
            <person name="Li H."/>
            <person name="Toleman M.A."/>
            <person name="Bennett P.M."/>
            <person name="Jones R.N."/>
            <person name="Walsh T.R."/>
        </authorList>
    </citation>
    <scope>NUCLEOTIDE SEQUENCE [LARGE SCALE GENOMIC DNA]</scope>
    <source>
        <strain evidence="8 13">07-406</strain>
        <plasmid evidence="8 13">pMATVIM-7</plasmid>
    </source>
</reference>
<reference evidence="11" key="3">
    <citation type="journal article" date="2001" name="Antimicrob. Agents Chemother.">
        <title>Standard numbering scheme for class B beta-lactamases.</title>
        <authorList>
            <consortium name="Metallo-beta-lactamases Working Group"/>
            <person name="Galleni M."/>
            <person name="Lamotte-Brasseur J."/>
            <person name="Rossolini G.M."/>
            <person name="Spencer J."/>
            <person name="Dideberg O."/>
            <person name="Frere J.M."/>
        </authorList>
    </citation>
    <scope>AMINO ACID NUMBERING SCHEME</scope>
</reference>
<reference evidence="11" key="4">
    <citation type="journal article" date="2008" name="Antimicrob. Agents Chemother.">
        <title>Kinetic characterization of VIM-7, a divergent member of the VIM metallo-beta-lactamase family.</title>
        <authorList>
            <person name="Samuelsen O."/>
            <person name="Castanheira M."/>
            <person name="Walsh T.R."/>
            <person name="Spencer J."/>
        </authorList>
    </citation>
    <scope>FUNCTION</scope>
    <scope>CATALYTIC ACTIVITY</scope>
    <scope>BIOPHYSICOCHEMICAL PROPERTIES</scope>
</reference>
<reference evidence="14 15" key="5">
    <citation type="journal article" date="2011" name="J. Mol. Biol.">
        <title>Structural and computational investigations of VIM-7: insights into the substrate specificity of vim metallo-beta-lactamases.</title>
        <authorList>
            <person name="Borra P.S."/>
            <person name="Leiros H.K."/>
            <person name="Ahmad R."/>
            <person name="Spencer J."/>
            <person name="Leiros I."/>
            <person name="Walsh T.R."/>
            <person name="Sundsfjord A."/>
            <person name="Samuelsen O."/>
        </authorList>
    </citation>
    <scope>X-RAY CRYSTALLOGRAPHY (1.70 ANGSTROMS) IN COMPLEXES WITH ZINC</scope>
</reference>
<reference evidence="17 18 19 20" key="6">
    <citation type="journal article" date="2014" name="Antimicrob. Agents Chemother.">
        <title>His224 alters the R2 drug binding site and Phe218 influences the catalytic efficiency of the metallo-beta-lactamase VIM-7.</title>
        <authorList>
            <person name="Leiros H.K."/>
            <person name="Skagseth S."/>
            <person name="Edvardsen K.S."/>
            <person name="Lorentzen M.S."/>
            <person name="Bjerga G.E."/>
            <person name="Leiros I."/>
            <person name="Samuelsen O."/>
        </authorList>
    </citation>
    <scope>X-RAY CRYSTALLOGRAPHY (1.25 ANGSTROMS) OF APO FORM AND MUTANTS ALA-117; TYR-194 AND TYR-200 IN COMPLEXES WITH ZINC</scope>
    <scope>MUTAGENESIS OF ASP-117; PHE-194 AND HIS-200</scope>
</reference>
<proteinExistence type="evidence at protein level"/>
<feature type="signal peptide" evidence="3">
    <location>
        <begin position="1"/>
        <end position="17"/>
    </location>
</feature>
<feature type="chain" id="PRO_5010846774" description="Metallo-beta-lactamase VIM-7" evidence="3">
    <location>
        <begin position="18"/>
        <end position="265"/>
    </location>
</feature>
<feature type="binding site" evidence="14 15 17">
    <location>
        <position position="113"/>
    </location>
    <ligand>
        <name>Zn(2+)</name>
        <dbReference type="ChEBI" id="CHEBI:29105"/>
        <label>1</label>
    </ligand>
</feature>
<feature type="binding site" evidence="14 15 17">
    <location>
        <position position="115"/>
    </location>
    <ligand>
        <name>Zn(2+)</name>
        <dbReference type="ChEBI" id="CHEBI:29105"/>
        <label>1</label>
    </ligand>
</feature>
<feature type="binding site" evidence="14 16 17">
    <location>
        <position position="117"/>
    </location>
    <ligand>
        <name>Zn(2+)</name>
        <dbReference type="ChEBI" id="CHEBI:29105"/>
        <label>2</label>
    </ligand>
</feature>
<feature type="binding site" evidence="15 17">
    <location>
        <position position="178"/>
    </location>
    <ligand>
        <name>Zn(2+)</name>
        <dbReference type="ChEBI" id="CHEBI:29105"/>
        <label>1</label>
    </ligand>
</feature>
<feature type="binding site" evidence="14 16 17">
    <location>
        <position position="197"/>
    </location>
    <ligand>
        <name>Zn(2+)</name>
        <dbReference type="ChEBI" id="CHEBI:29105"/>
        <label>2</label>
    </ligand>
</feature>
<feature type="binding site" evidence="14 16 17">
    <location>
        <position position="239"/>
    </location>
    <ligand>
        <name>Zn(2+)</name>
        <dbReference type="ChEBI" id="CHEBI:29105"/>
        <label>2</label>
    </ligand>
</feature>
<feature type="mutagenesis site" description="Prevents coordination with a zinc ion and probably abolishes catalytic activity. Reduces thermal stability, but retains structural integrity." evidence="7">
    <original>D</original>
    <variation>A</variation>
    <location>
        <position position="117"/>
    </location>
</feature>
<feature type="mutagenesis site" description="Increases catalytic efficiency about 30-fold, with respect to benzylpenicillin and ampicillin. Increases catalytic efficiency about 10-fold, with respect to various cephalosporin antibiotics, including ceftazidime. Increases catalytic efficiency about 10-fold, with respect to imipenem, but reduces efficiency about 2-fold with respect to carbapenem antibiotics, meropenem and ertapenem." evidence="7">
    <original>F</original>
    <variation>Y</variation>
    <location>
        <position position="194"/>
    </location>
</feature>
<feature type="mutagenesis site" description="Increases catalytic efficiency about 5-fold, with respect to benzylpenicillin and ampicillin. Increases catalytic efficiency about 10-fold, with respect to various cephalosporin antibiotics, excluding cefuroxime. Increases catalytic efficiency about 10-fold, with respect to imipenem, but reduces efficiency about 2-fold with respect to meropenem." evidence="7">
    <original>H</original>
    <variation>Y</variation>
    <location>
        <position position="200"/>
    </location>
</feature>
<feature type="turn" evidence="21">
    <location>
        <begin position="35"/>
        <end position="37"/>
    </location>
</feature>
<feature type="strand" evidence="21">
    <location>
        <begin position="44"/>
        <end position="49"/>
    </location>
</feature>
<feature type="strand" evidence="21">
    <location>
        <begin position="52"/>
        <end position="61"/>
    </location>
</feature>
<feature type="strand" evidence="21">
    <location>
        <begin position="64"/>
        <end position="75"/>
    </location>
</feature>
<feature type="strand" evidence="21">
    <location>
        <begin position="78"/>
        <end position="83"/>
    </location>
</feature>
<feature type="helix" evidence="21">
    <location>
        <begin position="88"/>
        <end position="101"/>
    </location>
</feature>
<feature type="strand" evidence="21">
    <location>
        <begin position="106"/>
        <end position="110"/>
    </location>
</feature>
<feature type="strand" evidence="21">
    <location>
        <begin position="112"/>
        <end position="115"/>
    </location>
</feature>
<feature type="helix" evidence="21">
    <location>
        <begin position="116"/>
        <end position="119"/>
    </location>
</feature>
<feature type="helix" evidence="21">
    <location>
        <begin position="122"/>
        <end position="127"/>
    </location>
</feature>
<feature type="strand" evidence="21">
    <location>
        <begin position="131"/>
        <end position="134"/>
    </location>
</feature>
<feature type="helix" evidence="21">
    <location>
        <begin position="136"/>
        <end position="145"/>
    </location>
</feature>
<feature type="strand" evidence="21">
    <location>
        <begin position="151"/>
        <end position="153"/>
    </location>
</feature>
<feature type="strand" evidence="21">
    <location>
        <begin position="162"/>
        <end position="166"/>
    </location>
</feature>
<feature type="strand" evidence="21">
    <location>
        <begin position="169"/>
        <end position="173"/>
    </location>
</feature>
<feature type="strand" evidence="21">
    <location>
        <begin position="176"/>
        <end position="179"/>
    </location>
</feature>
<feature type="strand" evidence="21">
    <location>
        <begin position="184"/>
        <end position="187"/>
    </location>
</feature>
<feature type="turn" evidence="21">
    <location>
        <begin position="188"/>
        <end position="191"/>
    </location>
</feature>
<feature type="strand" evidence="21">
    <location>
        <begin position="192"/>
        <end position="196"/>
    </location>
</feature>
<feature type="turn" evidence="21">
    <location>
        <begin position="215"/>
        <end position="217"/>
    </location>
</feature>
<feature type="helix" evidence="21">
    <location>
        <begin position="218"/>
        <end position="228"/>
    </location>
</feature>
<feature type="strand" evidence="21">
    <location>
        <begin position="233"/>
        <end position="240"/>
    </location>
</feature>
<feature type="helix" evidence="21">
    <location>
        <begin position="246"/>
        <end position="256"/>
    </location>
</feature>
<dbReference type="EC" id="3.5.2.6" evidence="6"/>
<dbReference type="EMBL" id="AJ536835">
    <property type="protein sequence ID" value="CAD61201.1"/>
    <property type="molecule type" value="Genomic_DNA"/>
</dbReference>
<dbReference type="EMBL" id="AM778842">
    <property type="protein sequence ID" value="CAO91763.1"/>
    <property type="molecule type" value="Genomic_DNA"/>
</dbReference>
<dbReference type="RefSeq" id="WP_011997479.1">
    <property type="nucleotide sequence ID" value="NC_009739.1"/>
</dbReference>
<dbReference type="RefSeq" id="YP_001427370.1">
    <property type="nucleotide sequence ID" value="NC_009739.1"/>
</dbReference>
<dbReference type="PDB" id="2Y87">
    <property type="method" value="X-ray"/>
    <property type="resolution" value="1.86 A"/>
    <property type="chains" value="A=1-265"/>
</dbReference>
<dbReference type="PDB" id="2Y8A">
    <property type="method" value="X-ray"/>
    <property type="resolution" value="2.33 A"/>
    <property type="chains" value="A=1-265"/>
</dbReference>
<dbReference type="PDB" id="2Y8B">
    <property type="method" value="X-ray"/>
    <property type="resolution" value="1.70 A"/>
    <property type="chains" value="A=1-265"/>
</dbReference>
<dbReference type="PDB" id="4D1T">
    <property type="method" value="X-ray"/>
    <property type="resolution" value="1.25 A"/>
    <property type="chains" value="A=1-265"/>
</dbReference>
<dbReference type="PDB" id="4D1U">
    <property type="method" value="X-ray"/>
    <property type="resolution" value="1.80 A"/>
    <property type="chains" value="A=1-265"/>
</dbReference>
<dbReference type="PDB" id="4D1V">
    <property type="method" value="X-ray"/>
    <property type="resolution" value="1.70 A"/>
    <property type="chains" value="A=1-265"/>
</dbReference>
<dbReference type="PDB" id="4D1W">
    <property type="method" value="X-ray"/>
    <property type="resolution" value="1.40 A"/>
    <property type="chains" value="A=1-265"/>
</dbReference>
<dbReference type="PDBsum" id="2Y87"/>
<dbReference type="PDBsum" id="2Y8A"/>
<dbReference type="PDBsum" id="2Y8B"/>
<dbReference type="PDBsum" id="4D1T"/>
<dbReference type="PDBsum" id="4D1U"/>
<dbReference type="PDBsum" id="4D1V"/>
<dbReference type="PDBsum" id="4D1W"/>
<dbReference type="SMR" id="Q840P9"/>
<dbReference type="ChEMBL" id="CHEMBL1287605"/>
<dbReference type="CARD" id="ARO:3002277">
    <property type="molecule name" value="VIM-7"/>
    <property type="mechanism identifier" value="ARO:0001004"/>
    <property type="mechanism name" value="antibiotic inactivation"/>
</dbReference>
<dbReference type="KEGG" id="ag:CAD61201"/>
<dbReference type="BRENDA" id="3.5.2.6">
    <property type="organism ID" value="5087"/>
</dbReference>
<dbReference type="EvolutionaryTrace" id="Q840P9"/>
<dbReference type="GO" id="GO:0042597">
    <property type="term" value="C:periplasmic space"/>
    <property type="evidence" value="ECO:0007669"/>
    <property type="project" value="UniProtKB-SubCell"/>
</dbReference>
<dbReference type="GO" id="GO:0008800">
    <property type="term" value="F:beta-lactamase activity"/>
    <property type="evidence" value="ECO:0007669"/>
    <property type="project" value="UniProtKB-EC"/>
</dbReference>
<dbReference type="GO" id="GO:0008270">
    <property type="term" value="F:zinc ion binding"/>
    <property type="evidence" value="ECO:0007669"/>
    <property type="project" value="InterPro"/>
</dbReference>
<dbReference type="GO" id="GO:0017001">
    <property type="term" value="P:antibiotic catabolic process"/>
    <property type="evidence" value="ECO:0007669"/>
    <property type="project" value="InterPro"/>
</dbReference>
<dbReference type="GO" id="GO:0046677">
    <property type="term" value="P:response to antibiotic"/>
    <property type="evidence" value="ECO:0007669"/>
    <property type="project" value="UniProtKB-KW"/>
</dbReference>
<dbReference type="Gene3D" id="3.60.15.10">
    <property type="entry name" value="Ribonuclease Z/Hydroxyacylglutathione hydrolase-like"/>
    <property type="match status" value="1"/>
</dbReference>
<dbReference type="InterPro" id="IPR001018">
    <property type="entry name" value="Beta-lactamase_class-B_CS"/>
</dbReference>
<dbReference type="InterPro" id="IPR001279">
    <property type="entry name" value="Metallo-B-lactamas"/>
</dbReference>
<dbReference type="InterPro" id="IPR050855">
    <property type="entry name" value="NDM-1-like"/>
</dbReference>
<dbReference type="InterPro" id="IPR036866">
    <property type="entry name" value="RibonucZ/Hydroxyglut_hydro"/>
</dbReference>
<dbReference type="NCBIfam" id="NF012229">
    <property type="entry name" value="bla_class_B_core"/>
    <property type="match status" value="1"/>
</dbReference>
<dbReference type="NCBIfam" id="NF033088">
    <property type="entry name" value="bla_subclass_B1"/>
    <property type="match status" value="1"/>
</dbReference>
<dbReference type="NCBIfam" id="NF012100">
    <property type="entry name" value="blaVIM"/>
    <property type="match status" value="1"/>
</dbReference>
<dbReference type="PANTHER" id="PTHR42951:SF4">
    <property type="entry name" value="ACYL-COENZYME A THIOESTERASE MBLAC2"/>
    <property type="match status" value="1"/>
</dbReference>
<dbReference type="PANTHER" id="PTHR42951">
    <property type="entry name" value="METALLO-BETA-LACTAMASE DOMAIN-CONTAINING"/>
    <property type="match status" value="1"/>
</dbReference>
<dbReference type="Pfam" id="PF00753">
    <property type="entry name" value="Lactamase_B"/>
    <property type="match status" value="1"/>
</dbReference>
<dbReference type="SMART" id="SM00849">
    <property type="entry name" value="Lactamase_B"/>
    <property type="match status" value="1"/>
</dbReference>
<dbReference type="SUPFAM" id="SSF56281">
    <property type="entry name" value="Metallo-hydrolase/oxidoreductase"/>
    <property type="match status" value="1"/>
</dbReference>
<dbReference type="PROSITE" id="PS00743">
    <property type="entry name" value="BETA_LACTAMASE_B_1"/>
    <property type="match status" value="1"/>
</dbReference>